<name>RPD2B_ARATH</name>
<feature type="chain" id="PRO_0000407925" description="DNA-directed RNA polymerase D subunit 2b">
    <location>
        <begin position="1"/>
        <end position="1119"/>
    </location>
</feature>
<feature type="zinc finger region" description="C4-type" evidence="1">
    <location>
        <begin position="1055"/>
        <end position="1083"/>
    </location>
</feature>
<feature type="binding site" evidence="1">
    <location>
        <position position="732"/>
    </location>
    <ligand>
        <name>Mg(2+)</name>
        <dbReference type="ChEBI" id="CHEBI:18420"/>
        <note>ligand shared with RPB1</note>
    </ligand>
</feature>
<feature type="binding site" evidence="1">
    <location>
        <position position="1055"/>
    </location>
    <ligand>
        <name>Zn(2+)</name>
        <dbReference type="ChEBI" id="CHEBI:29105"/>
    </ligand>
</feature>
<feature type="binding site" evidence="1">
    <location>
        <position position="1058"/>
    </location>
    <ligand>
        <name>Zn(2+)</name>
        <dbReference type="ChEBI" id="CHEBI:29105"/>
    </ligand>
</feature>
<feature type="binding site" evidence="1">
    <location>
        <position position="1080"/>
    </location>
    <ligand>
        <name>Zn(2+)</name>
        <dbReference type="ChEBI" id="CHEBI:29105"/>
    </ligand>
</feature>
<feature type="binding site" evidence="1">
    <location>
        <position position="1083"/>
    </location>
    <ligand>
        <name>Zn(2+)</name>
        <dbReference type="ChEBI" id="CHEBI:29105"/>
    </ligand>
</feature>
<feature type="splice variant" id="VSP_040974" description="In isoform 2." evidence="2">
    <original>MDVDEIESAGQINISELGESFLQTFCKKAATSFFEEFGLISHQLNSYNFFIEHGLQNVFESFGDILVEPSFDVIKKKDGDWRYAT</original>
    <variation>MACRLQNMTYSARIKVNAQVE</variation>
    <location>
        <begin position="1"/>
        <end position="85"/>
    </location>
</feature>
<proteinExistence type="evidence at transcript level"/>
<gene>
    <name type="primary">NRPD2b</name>
    <name type="synonym">RPD2b</name>
    <name type="ordered locus">At3g18090</name>
    <name type="ORF">MRC8.7</name>
</gene>
<sequence length="1119" mass="126262">MDVDEIESAGQINISELGESFLQTFCKKAATSFFEEFGLISHQLNSYNFFIEHGLQNVFESFGDILVEPSFDVIKKKDGDWRYATVFKKIVIKHDKFKTGQDEYVEKEILDVKKQDILIGSIPVMVKSVLCKTSEKGKENCKKGNCAFDQGGYFVIKGAEKVFIAQEQMCTKRLWISNSPWTVSFRSETKRNRFIVRLSENEKAEDYKIMEKVLTVYFLSTEIPVWLLFFALGVSSDKEAMDLIAFDGDDASITNSLIASIHEADAVCEAFRCGNNALTYVEHQIKSTKFPPAESVDDCLRLYLFPCLQGLKKKARFLGYMVKCLLSAYAGKRKCENRDSFRNKRIELAGELLEREIRVHLAHARRKMTRAMQKQLSGDGDLKPIEHYLDASVITNGLNRAFSTGAWSHPFRKMERVSGVVANLGRANPLQTLIDLRRTRQQVLYTGKVGDARHPHPSHWGRVCFLSTPDGENCGLVKNMSLLGLVSTQGLESVVEMLFTCGMEELMNDTSTPLCGKHKVLLNGDWVGLCADSESFVGELKSRRRQSELPLEMEIKRDKDDNEVRIFTDAGRLLRPLLVVENLHKLKQDKPTQYPFKHLLDQGILELIGIEEEEDCTTAWGIKQLLKEPKNYTHCELDLSFLLGVSCAIVPFANHDHGKRVLYQSQKHCQQAIGFSSTNPNIRCDTLSQQLFYPQKPLFKTLASECLEKEVLFNGQNAIVAVNVHLGYNQEDSIVMNKASLERGMFRSEQIRSYKAEVDTKDSEKRKKMDELVQFGKTYSKIGKVDSLEDDGFPFIGANMSTGDIVIGRCTESGADHSIKLKHTERGIVQKVVLSSNDEGKNFAAVSLRQVRSPCLGDKFSSMHGQKGVLGYLEEQQNFPFTIQGIVPDIVINPHAFPSRQTPGQLLEAALSKGIACPIQKKEGSSAAYTKLTRHATPFSTPGVTEITEQLHRAGFSRWGNERVYNGRSGEMMRSLIFMGPTFYQRLVHMSENKVKFRNTGPVHPLTRQPVADRKRFGGIRFGEMERDCLIAHGASANLHERLFTLSDSSQMHICRKCKTYANVIERTPSSGRKIRGPYCRVCASSDHVVRVYVPYGAKLLCQELFSMGITLNFDTKLC</sequence>
<dbReference type="EC" id="2.7.7.6"/>
<dbReference type="EMBL" id="AY935712">
    <property type="status" value="NOT_ANNOTATED_CDS"/>
    <property type="molecule type" value="mRNA"/>
</dbReference>
<dbReference type="EMBL" id="AB020749">
    <property type="protein sequence ID" value="BAB02021.1"/>
    <property type="molecule type" value="Genomic_DNA"/>
</dbReference>
<dbReference type="EMBL" id="CP002686">
    <property type="protein sequence ID" value="AEE76045.1"/>
    <property type="molecule type" value="Genomic_DNA"/>
</dbReference>
<dbReference type="EMBL" id="DQ029109">
    <property type="protein sequence ID" value="AAY82004.1"/>
    <property type="molecule type" value="mRNA"/>
</dbReference>
<dbReference type="RefSeq" id="NP_188437.2">
    <molecule id="Q9LV32-2"/>
    <property type="nucleotide sequence ID" value="NM_112691.4"/>
</dbReference>
<dbReference type="SMR" id="Q9LV32"/>
<dbReference type="BioGRID" id="6667">
    <property type="interactions" value="35"/>
</dbReference>
<dbReference type="FunCoup" id="Q9LV32">
    <property type="interactions" value="288"/>
</dbReference>
<dbReference type="STRING" id="3702.Q9LV32"/>
<dbReference type="GlyGen" id="Q9LV32">
    <property type="glycosylation" value="1 site"/>
</dbReference>
<dbReference type="iPTMnet" id="Q9LV32"/>
<dbReference type="PeptideAtlas" id="Q9LV32"/>
<dbReference type="ProteomicsDB" id="226919">
    <molecule id="Q9LV32-1"/>
</dbReference>
<dbReference type="EnsemblPlants" id="AT3G18090.1">
    <molecule id="Q9LV32-2"/>
    <property type="protein sequence ID" value="AT3G18090.1"/>
    <property type="gene ID" value="AT3G18090"/>
</dbReference>
<dbReference type="GeneID" id="821334"/>
<dbReference type="Gramene" id="AT3G18090.1">
    <molecule id="Q9LV32-2"/>
    <property type="protein sequence ID" value="AT3G18090.1"/>
    <property type="gene ID" value="AT3G18090"/>
</dbReference>
<dbReference type="KEGG" id="ath:AT3G18090"/>
<dbReference type="Araport" id="AT3G18090"/>
<dbReference type="TAIR" id="AT3G18090">
    <property type="gene designation" value="NRPD2B"/>
</dbReference>
<dbReference type="eggNOG" id="KOG0214">
    <property type="taxonomic scope" value="Eukaryota"/>
</dbReference>
<dbReference type="HOGENOM" id="CLU_000524_5_2_1"/>
<dbReference type="InParanoid" id="Q9LV32"/>
<dbReference type="OMA" id="RFISCGM"/>
<dbReference type="PhylomeDB" id="Q9LV32"/>
<dbReference type="PRO" id="PR:Q9LV32"/>
<dbReference type="Proteomes" id="UP000006548">
    <property type="component" value="Chromosome 3"/>
</dbReference>
<dbReference type="ExpressionAtlas" id="Q9LV32">
    <property type="expression patterns" value="baseline and differential"/>
</dbReference>
<dbReference type="GO" id="GO:0005739">
    <property type="term" value="C:mitochondrion"/>
    <property type="evidence" value="ECO:0007669"/>
    <property type="project" value="GOC"/>
</dbReference>
<dbReference type="GO" id="GO:0005634">
    <property type="term" value="C:nucleus"/>
    <property type="evidence" value="ECO:0000250"/>
    <property type="project" value="UniProtKB"/>
</dbReference>
<dbReference type="GO" id="GO:0009536">
    <property type="term" value="C:plastid"/>
    <property type="evidence" value="ECO:0007669"/>
    <property type="project" value="GOC"/>
</dbReference>
<dbReference type="GO" id="GO:0000418">
    <property type="term" value="C:RNA polymerase IV complex"/>
    <property type="evidence" value="ECO:0000250"/>
    <property type="project" value="UniProtKB"/>
</dbReference>
<dbReference type="GO" id="GO:0000419">
    <property type="term" value="C:RNA polymerase V complex"/>
    <property type="evidence" value="ECO:0000250"/>
    <property type="project" value="UniProtKB"/>
</dbReference>
<dbReference type="GO" id="GO:0003677">
    <property type="term" value="F:DNA binding"/>
    <property type="evidence" value="ECO:0007669"/>
    <property type="project" value="InterPro"/>
</dbReference>
<dbReference type="GO" id="GO:0003899">
    <property type="term" value="F:DNA-directed RNA polymerase activity"/>
    <property type="evidence" value="ECO:0007669"/>
    <property type="project" value="UniProtKB-EC"/>
</dbReference>
<dbReference type="GO" id="GO:0032549">
    <property type="term" value="F:ribonucleoside binding"/>
    <property type="evidence" value="ECO:0007669"/>
    <property type="project" value="InterPro"/>
</dbReference>
<dbReference type="GO" id="GO:0008270">
    <property type="term" value="F:zinc ion binding"/>
    <property type="evidence" value="ECO:0007669"/>
    <property type="project" value="UniProtKB-KW"/>
</dbReference>
<dbReference type="GO" id="GO:0006351">
    <property type="term" value="P:DNA-templated transcription"/>
    <property type="evidence" value="ECO:0007669"/>
    <property type="project" value="InterPro"/>
</dbReference>
<dbReference type="CDD" id="cd00653">
    <property type="entry name" value="RNA_pol_B_RPB2"/>
    <property type="match status" value="1"/>
</dbReference>
<dbReference type="FunFam" id="2.40.50.150:FF:000005">
    <property type="entry name" value="DNA-directed RNA polymerase subunit beta"/>
    <property type="match status" value="1"/>
</dbReference>
<dbReference type="FunFam" id="3.90.1100.10:FF:000012">
    <property type="entry name" value="DNA-directed RNA polymerase subunit beta"/>
    <property type="match status" value="1"/>
</dbReference>
<dbReference type="FunFam" id="3.90.1110.10:FF:000010">
    <property type="entry name" value="DNA-directed RNA polymerase subunit beta"/>
    <property type="match status" value="1"/>
</dbReference>
<dbReference type="FunFam" id="3.90.1800.10:FF:000006">
    <property type="entry name" value="DNA-directed RNA polymerase subunit beta"/>
    <property type="match status" value="1"/>
</dbReference>
<dbReference type="Gene3D" id="2.40.50.150">
    <property type="match status" value="1"/>
</dbReference>
<dbReference type="Gene3D" id="3.90.1100.10">
    <property type="match status" value="2"/>
</dbReference>
<dbReference type="Gene3D" id="2.40.270.10">
    <property type="entry name" value="DNA-directed RNA polymerase, subunit 2, domain 6"/>
    <property type="match status" value="1"/>
</dbReference>
<dbReference type="Gene3D" id="3.90.1800.10">
    <property type="entry name" value="RNA polymerase alpha subunit dimerisation domain"/>
    <property type="match status" value="1"/>
</dbReference>
<dbReference type="Gene3D" id="3.90.1110.10">
    <property type="entry name" value="RNA polymerase Rpb2, domain 2"/>
    <property type="match status" value="1"/>
</dbReference>
<dbReference type="InterPro" id="IPR015712">
    <property type="entry name" value="DNA-dir_RNA_pol_su2"/>
</dbReference>
<dbReference type="InterPro" id="IPR007120">
    <property type="entry name" value="DNA-dir_RNAP_su2_dom"/>
</dbReference>
<dbReference type="InterPro" id="IPR037033">
    <property type="entry name" value="DNA-dir_RNAP_su2_hyb_sf"/>
</dbReference>
<dbReference type="InterPro" id="IPR007121">
    <property type="entry name" value="RNA_pol_bsu_CS"/>
</dbReference>
<dbReference type="InterPro" id="IPR007644">
    <property type="entry name" value="RNA_pol_bsu_protrusion"/>
</dbReference>
<dbReference type="InterPro" id="IPR007642">
    <property type="entry name" value="RNA_pol_Rpb2_2"/>
</dbReference>
<dbReference type="InterPro" id="IPR037034">
    <property type="entry name" value="RNA_pol_Rpb2_2_sf"/>
</dbReference>
<dbReference type="InterPro" id="IPR007645">
    <property type="entry name" value="RNA_pol_Rpb2_3"/>
</dbReference>
<dbReference type="InterPro" id="IPR007646">
    <property type="entry name" value="RNA_pol_Rpb2_4"/>
</dbReference>
<dbReference type="InterPro" id="IPR007641">
    <property type="entry name" value="RNA_pol_Rpb2_7"/>
</dbReference>
<dbReference type="InterPro" id="IPR014724">
    <property type="entry name" value="RNA_pol_RPB2_OB-fold"/>
</dbReference>
<dbReference type="PANTHER" id="PTHR20856">
    <property type="entry name" value="DNA-DIRECTED RNA POLYMERASE I SUBUNIT 2"/>
    <property type="match status" value="1"/>
</dbReference>
<dbReference type="Pfam" id="PF04563">
    <property type="entry name" value="RNA_pol_Rpb2_1"/>
    <property type="match status" value="1"/>
</dbReference>
<dbReference type="Pfam" id="PF04561">
    <property type="entry name" value="RNA_pol_Rpb2_2"/>
    <property type="match status" value="1"/>
</dbReference>
<dbReference type="Pfam" id="PF04565">
    <property type="entry name" value="RNA_pol_Rpb2_3"/>
    <property type="match status" value="1"/>
</dbReference>
<dbReference type="Pfam" id="PF04566">
    <property type="entry name" value="RNA_pol_Rpb2_4"/>
    <property type="match status" value="1"/>
</dbReference>
<dbReference type="Pfam" id="PF00562">
    <property type="entry name" value="RNA_pol_Rpb2_6"/>
    <property type="match status" value="1"/>
</dbReference>
<dbReference type="Pfam" id="PF04560">
    <property type="entry name" value="RNA_pol_Rpb2_7"/>
    <property type="match status" value="1"/>
</dbReference>
<dbReference type="SUPFAM" id="SSF64484">
    <property type="entry name" value="beta and beta-prime subunits of DNA dependent RNA-polymerase"/>
    <property type="match status" value="1"/>
</dbReference>
<dbReference type="PROSITE" id="PS01166">
    <property type="entry name" value="RNA_POL_BETA"/>
    <property type="match status" value="1"/>
</dbReference>
<reference key="1">
    <citation type="journal article" date="2005" name="Genes Dev.">
        <title>Reinforcement of silencing at transposons and highly repeated sequences requires the concerted action of two distinct RNA polymerases IV in Arabidopsis.</title>
        <authorList>
            <person name="Pontier D."/>
            <person name="Yahubyan G."/>
            <person name="Vega D."/>
            <person name="Bulski A."/>
            <person name="Saez-Vasquez J."/>
            <person name="Hakimi M.-A."/>
            <person name="Lerbs-Mache S."/>
            <person name="Colot V."/>
            <person name="Lagrange T."/>
        </authorList>
    </citation>
    <scope>NUCLEOTIDE SEQUENCE [MRNA] (ISOFORM 2)</scope>
</reference>
<reference key="2">
    <citation type="journal article" date="2000" name="DNA Res.">
        <title>Structural analysis of Arabidopsis thaliana chromosome 3. II. Sequence features of the 4,251,695 bp regions covered by 90 P1, TAC and BAC clones.</title>
        <authorList>
            <person name="Kaneko T."/>
            <person name="Katoh T."/>
            <person name="Sato S."/>
            <person name="Nakamura Y."/>
            <person name="Asamizu E."/>
            <person name="Tabata S."/>
        </authorList>
    </citation>
    <scope>NUCLEOTIDE SEQUENCE [LARGE SCALE GENOMIC DNA]</scope>
    <source>
        <strain>cv. Columbia</strain>
    </source>
</reference>
<reference key="3">
    <citation type="journal article" date="2017" name="Plant J.">
        <title>Araport11: a complete reannotation of the Arabidopsis thaliana reference genome.</title>
        <authorList>
            <person name="Cheng C.Y."/>
            <person name="Krishnakumar V."/>
            <person name="Chan A.P."/>
            <person name="Thibaud-Nissen F."/>
            <person name="Schobel S."/>
            <person name="Town C.D."/>
        </authorList>
    </citation>
    <scope>GENOME REANNOTATION</scope>
    <source>
        <strain>cv. Columbia</strain>
    </source>
</reference>
<reference key="4">
    <citation type="journal article" date="2007" name="J. Mol. Evol.">
        <title>A multistep process gave rise to RNA polymerase IV of land plants.</title>
        <authorList>
            <person name="Luo J."/>
            <person name="Hall B.D."/>
        </authorList>
    </citation>
    <scope>NUCLEOTIDE SEQUENCE [MRNA] OF 787-1119 (ISOFORM 1/2)</scope>
</reference>
<reference key="5">
    <citation type="journal article" date="2007" name="Proc. Natl. Acad. Sci. U.S.A.">
        <title>Role of RNA polymerase IV in plant small RNA metabolism.</title>
        <authorList>
            <person name="Zhang X."/>
            <person name="Henderson I.R."/>
            <person name="Lu C."/>
            <person name="Green P.J."/>
            <person name="Jacobsen S.E."/>
        </authorList>
    </citation>
    <scope>FUNCTION</scope>
    <source>
        <strain>cv. Columbia</strain>
    </source>
</reference>
<protein>
    <recommendedName>
        <fullName>DNA-directed RNA polymerase D subunit 2b</fullName>
        <shortName>AtNRPD2b</shortName>
        <shortName>Nuclear RNA polymerase D 2b</shortName>
        <ecNumber>2.7.7.6</ecNumber>
    </recommendedName>
    <alternativeName>
        <fullName>RNA polymerase IV subunit 2b</fullName>
        <shortName>POL IV 2b</shortName>
    </alternativeName>
</protein>
<accession>Q9LV32</accession>
<accession>Q1ANE6</accession>
<evidence type="ECO:0000250" key="1"/>
<evidence type="ECO:0000303" key="2">
    <source>
    </source>
</evidence>
<evidence type="ECO:0000305" key="3"/>
<evidence type="ECO:0000305" key="4">
    <source>
    </source>
</evidence>
<keyword id="KW-0025">Alternative splicing</keyword>
<keyword id="KW-0240">DNA-directed RNA polymerase</keyword>
<keyword id="KW-0460">Magnesium</keyword>
<keyword id="KW-0479">Metal-binding</keyword>
<keyword id="KW-0548">Nucleotidyltransferase</keyword>
<keyword id="KW-0539">Nucleus</keyword>
<keyword id="KW-1185">Reference proteome</keyword>
<keyword id="KW-0804">Transcription</keyword>
<keyword id="KW-0805">Transcription regulation</keyword>
<keyword id="KW-0808">Transferase</keyword>
<keyword id="KW-0862">Zinc</keyword>
<keyword id="KW-0863">Zinc-finger</keyword>
<organism>
    <name type="scientific">Arabidopsis thaliana</name>
    <name type="common">Mouse-ear cress</name>
    <dbReference type="NCBI Taxonomy" id="3702"/>
    <lineage>
        <taxon>Eukaryota</taxon>
        <taxon>Viridiplantae</taxon>
        <taxon>Streptophyta</taxon>
        <taxon>Embryophyta</taxon>
        <taxon>Tracheophyta</taxon>
        <taxon>Spermatophyta</taxon>
        <taxon>Magnoliopsida</taxon>
        <taxon>eudicotyledons</taxon>
        <taxon>Gunneridae</taxon>
        <taxon>Pentapetalae</taxon>
        <taxon>rosids</taxon>
        <taxon>malvids</taxon>
        <taxon>Brassicales</taxon>
        <taxon>Brassicaceae</taxon>
        <taxon>Camelineae</taxon>
        <taxon>Arabidopsis</taxon>
    </lineage>
</organism>
<comment type="function">
    <text evidence="4">DNA-dependent RNA polymerase catalyzes the transcription of DNA into RNA using the four ribonucleoside triphosphates as substrates. Second largest component of RNA polymerase IVa and IVb which mediate short-interfering RNAs (siRNA) accumulation and subsequent RNA-directed DNA methylation-dependent (RdDM) silencing of endogenous repeated sequences, including transposable largest subunit. Also required for full erasure of methylation elements. Required for intercellular RNA interference (RNAi) leading to systemic post-transcriptional gene silencing (Probable).</text>
</comment>
<comment type="catalytic activity">
    <reaction>
        <text>RNA(n) + a ribonucleoside 5'-triphosphate = RNA(n+1) + diphosphate</text>
        <dbReference type="Rhea" id="RHEA:21248"/>
        <dbReference type="Rhea" id="RHEA-COMP:14527"/>
        <dbReference type="Rhea" id="RHEA-COMP:17342"/>
        <dbReference type="ChEBI" id="CHEBI:33019"/>
        <dbReference type="ChEBI" id="CHEBI:61557"/>
        <dbReference type="ChEBI" id="CHEBI:140395"/>
        <dbReference type="EC" id="2.7.7.6"/>
    </reaction>
</comment>
<comment type="subunit">
    <text evidence="1">Component of the RNA polymerase IVa and IVb (Pol IV) complexes.</text>
</comment>
<comment type="subcellular location">
    <subcellularLocation>
        <location evidence="1">Nucleus</location>
    </subcellularLocation>
</comment>
<comment type="alternative products">
    <event type="alternative splicing"/>
    <isoform>
        <id>Q9LV32-1</id>
        <name>1</name>
        <sequence type="displayed"/>
    </isoform>
    <isoform>
        <id>Q9LV32-2</id>
        <name>2</name>
        <sequence type="described" ref="VSP_040974"/>
    </isoform>
</comment>
<comment type="similarity">
    <text evidence="3">Belongs to the RNA polymerase beta chain family.</text>
</comment>